<reference key="1">
    <citation type="journal article" date="2005" name="Proc. Natl. Acad. Sci. U.S.A.">
        <title>The psychrophilic lifestyle as revealed by the genome sequence of Colwellia psychrerythraea 34H through genomic and proteomic analyses.</title>
        <authorList>
            <person name="Methe B.A."/>
            <person name="Nelson K.E."/>
            <person name="Deming J.W."/>
            <person name="Momen B."/>
            <person name="Melamud E."/>
            <person name="Zhang X."/>
            <person name="Moult J."/>
            <person name="Madupu R."/>
            <person name="Nelson W.C."/>
            <person name="Dodson R.J."/>
            <person name="Brinkac L.M."/>
            <person name="Daugherty S.C."/>
            <person name="Durkin A.S."/>
            <person name="DeBoy R.T."/>
            <person name="Kolonay J.F."/>
            <person name="Sullivan S.A."/>
            <person name="Zhou L."/>
            <person name="Davidsen T.M."/>
            <person name="Wu M."/>
            <person name="Huston A.L."/>
            <person name="Lewis M."/>
            <person name="Weaver B."/>
            <person name="Weidman J.F."/>
            <person name="Khouri H."/>
            <person name="Utterback T.R."/>
            <person name="Feldblyum T.V."/>
            <person name="Fraser C.M."/>
        </authorList>
    </citation>
    <scope>NUCLEOTIDE SEQUENCE [LARGE SCALE GENOMIC DNA]</scope>
    <source>
        <strain>34H / ATCC BAA-681</strain>
    </source>
</reference>
<protein>
    <recommendedName>
        <fullName evidence="1">Flap endonuclease Xni</fullName>
        <shortName evidence="1">FEN</shortName>
        <ecNumber evidence="1">3.1.-.-</ecNumber>
    </recommendedName>
</protein>
<evidence type="ECO:0000255" key="1">
    <source>
        <dbReference type="HAMAP-Rule" id="MF_01192"/>
    </source>
</evidence>
<gene>
    <name evidence="1" type="primary">xni</name>
    <name evidence="1" type="synonym">ygdG</name>
    <name type="ordered locus">CPS_3538</name>
</gene>
<dbReference type="EC" id="3.1.-.-" evidence="1"/>
<dbReference type="EMBL" id="CP000083">
    <property type="protein sequence ID" value="AAZ28428.1"/>
    <property type="molecule type" value="Genomic_DNA"/>
</dbReference>
<dbReference type="RefSeq" id="WP_011044298.1">
    <property type="nucleotide sequence ID" value="NC_003910.7"/>
</dbReference>
<dbReference type="SMR" id="Q47YA8"/>
<dbReference type="STRING" id="167879.CPS_3538"/>
<dbReference type="KEGG" id="cps:CPS_3538"/>
<dbReference type="eggNOG" id="COG0258">
    <property type="taxonomic scope" value="Bacteria"/>
</dbReference>
<dbReference type="HOGENOM" id="CLU_004675_1_2_6"/>
<dbReference type="Proteomes" id="UP000000547">
    <property type="component" value="Chromosome"/>
</dbReference>
<dbReference type="GO" id="GO:0008409">
    <property type="term" value="F:5'-3' exonuclease activity"/>
    <property type="evidence" value="ECO:0007669"/>
    <property type="project" value="InterPro"/>
</dbReference>
<dbReference type="GO" id="GO:0017108">
    <property type="term" value="F:5'-flap endonuclease activity"/>
    <property type="evidence" value="ECO:0007669"/>
    <property type="project" value="UniProtKB-UniRule"/>
</dbReference>
<dbReference type="GO" id="GO:0003677">
    <property type="term" value="F:DNA binding"/>
    <property type="evidence" value="ECO:0007669"/>
    <property type="project" value="UniProtKB-UniRule"/>
</dbReference>
<dbReference type="GO" id="GO:0000287">
    <property type="term" value="F:magnesium ion binding"/>
    <property type="evidence" value="ECO:0007669"/>
    <property type="project" value="UniProtKB-UniRule"/>
</dbReference>
<dbReference type="GO" id="GO:0030955">
    <property type="term" value="F:potassium ion binding"/>
    <property type="evidence" value="ECO:0007669"/>
    <property type="project" value="UniProtKB-UniRule"/>
</dbReference>
<dbReference type="GO" id="GO:0033567">
    <property type="term" value="P:DNA replication, Okazaki fragment processing"/>
    <property type="evidence" value="ECO:0007669"/>
    <property type="project" value="UniProtKB-UniRule"/>
</dbReference>
<dbReference type="CDD" id="cd09898">
    <property type="entry name" value="H3TH_53EXO"/>
    <property type="match status" value="1"/>
</dbReference>
<dbReference type="CDD" id="cd09859">
    <property type="entry name" value="PIN_53EXO"/>
    <property type="match status" value="1"/>
</dbReference>
<dbReference type="FunFam" id="1.10.150.20:FF:000003">
    <property type="entry name" value="DNA polymerase I"/>
    <property type="match status" value="1"/>
</dbReference>
<dbReference type="Gene3D" id="1.10.150.20">
    <property type="entry name" value="5' to 3' exonuclease, C-terminal subdomain"/>
    <property type="match status" value="1"/>
</dbReference>
<dbReference type="Gene3D" id="3.40.50.1010">
    <property type="entry name" value="5'-nuclease"/>
    <property type="match status" value="1"/>
</dbReference>
<dbReference type="HAMAP" id="MF_01192">
    <property type="entry name" value="Xni"/>
    <property type="match status" value="1"/>
</dbReference>
<dbReference type="InterPro" id="IPR020046">
    <property type="entry name" value="5-3_exonucl_a-hlix_arch_N"/>
</dbReference>
<dbReference type="InterPro" id="IPR002421">
    <property type="entry name" value="5-3_exonuclease"/>
</dbReference>
<dbReference type="InterPro" id="IPR036279">
    <property type="entry name" value="5-3_exonuclease_C_sf"/>
</dbReference>
<dbReference type="InterPro" id="IPR020045">
    <property type="entry name" value="DNA_polI_H3TH"/>
</dbReference>
<dbReference type="InterPro" id="IPR038969">
    <property type="entry name" value="FEN"/>
</dbReference>
<dbReference type="InterPro" id="IPR008918">
    <property type="entry name" value="HhH2"/>
</dbReference>
<dbReference type="InterPro" id="IPR029060">
    <property type="entry name" value="PIN-like_dom_sf"/>
</dbReference>
<dbReference type="InterPro" id="IPR022895">
    <property type="entry name" value="Xni"/>
</dbReference>
<dbReference type="NCBIfam" id="NF007017">
    <property type="entry name" value="PRK09482.1"/>
    <property type="match status" value="1"/>
</dbReference>
<dbReference type="PANTHER" id="PTHR42646:SF2">
    <property type="entry name" value="5'-3' EXONUCLEASE FAMILY PROTEIN"/>
    <property type="match status" value="1"/>
</dbReference>
<dbReference type="PANTHER" id="PTHR42646">
    <property type="entry name" value="FLAP ENDONUCLEASE XNI"/>
    <property type="match status" value="1"/>
</dbReference>
<dbReference type="Pfam" id="PF01367">
    <property type="entry name" value="5_3_exonuc"/>
    <property type="match status" value="1"/>
</dbReference>
<dbReference type="Pfam" id="PF02739">
    <property type="entry name" value="5_3_exonuc_N"/>
    <property type="match status" value="1"/>
</dbReference>
<dbReference type="SMART" id="SM00475">
    <property type="entry name" value="53EXOc"/>
    <property type="match status" value="1"/>
</dbReference>
<dbReference type="SMART" id="SM00279">
    <property type="entry name" value="HhH2"/>
    <property type="match status" value="1"/>
</dbReference>
<dbReference type="SUPFAM" id="SSF47807">
    <property type="entry name" value="5' to 3' exonuclease, C-terminal subdomain"/>
    <property type="match status" value="1"/>
</dbReference>
<dbReference type="SUPFAM" id="SSF88723">
    <property type="entry name" value="PIN domain-like"/>
    <property type="match status" value="1"/>
</dbReference>
<accession>Q47YA8</accession>
<feature type="chain" id="PRO_0000297858" description="Flap endonuclease Xni">
    <location>
        <begin position="1"/>
        <end position="290"/>
    </location>
</feature>
<feature type="domain" description="5'-3' exonuclease" evidence="1">
    <location>
        <begin position="181"/>
        <end position="275"/>
    </location>
</feature>
<feature type="region of interest" description="Interaction with DNA" evidence="1">
    <location>
        <begin position="205"/>
        <end position="210"/>
    </location>
</feature>
<feature type="binding site" evidence="1">
    <location>
        <position position="125"/>
    </location>
    <ligand>
        <name>Mg(2+)</name>
        <dbReference type="ChEBI" id="CHEBI:18420"/>
    </ligand>
</feature>
<feature type="binding site" evidence="1">
    <location>
        <position position="192"/>
    </location>
    <ligand>
        <name>K(+)</name>
        <dbReference type="ChEBI" id="CHEBI:29103"/>
    </ligand>
</feature>
<feature type="binding site" evidence="1">
    <location>
        <position position="203"/>
    </location>
    <ligand>
        <name>K(+)</name>
        <dbReference type="ChEBI" id="CHEBI:29103"/>
    </ligand>
</feature>
<feature type="binding site" evidence="1">
    <location>
        <position position="206"/>
    </location>
    <ligand>
        <name>K(+)</name>
        <dbReference type="ChEBI" id="CHEBI:29103"/>
    </ligand>
</feature>
<organism>
    <name type="scientific">Colwellia psychrerythraea (strain 34H / ATCC BAA-681)</name>
    <name type="common">Vibrio psychroerythus</name>
    <dbReference type="NCBI Taxonomy" id="167879"/>
    <lineage>
        <taxon>Bacteria</taxon>
        <taxon>Pseudomonadati</taxon>
        <taxon>Pseudomonadota</taxon>
        <taxon>Gammaproteobacteria</taxon>
        <taxon>Alteromonadales</taxon>
        <taxon>Colwelliaceae</taxon>
        <taxon>Colwellia</taxon>
    </lineage>
</organism>
<proteinExistence type="inferred from homology"/>
<name>XNI_COLP3</name>
<keyword id="KW-0238">DNA-binding</keyword>
<keyword id="KW-0255">Endonuclease</keyword>
<keyword id="KW-0378">Hydrolase</keyword>
<keyword id="KW-0460">Magnesium</keyword>
<keyword id="KW-0479">Metal-binding</keyword>
<keyword id="KW-0540">Nuclease</keyword>
<keyword id="KW-0630">Potassium</keyword>
<sequence length="290" mass="32757">MSAHLILIDALNLIRRVYAVQERPFIQIKQDHDDELSASTLKQVLFNTQNTCVNALIKIIDQHQPTHALTVFDSQEPCWRYQLFEGYKKGRKKMPDHLANKLIDIQDAFMEQGVDSLTSDEDEADDLIATLAVKMALHGQKVTIISTDKGFLPLLSPNIHIYDYFNRRYLDEEHVQSKFSVKTSQLIDFWTLTGDNTNKIEGVSGIGQVTAAKLLNQYGSLKAILEATDLKDSLAEKLTQSLEQMDLARKLLTLKQDIPLGFNLKDIRLTTSSSAHEINANINLTTDDKS</sequence>
<comment type="function">
    <text evidence="1">Has flap endonuclease activity. During DNA replication, flap endonucleases cleave the 5'-overhanging flap structure that is generated by displacement synthesis when DNA polymerase encounters the 5'-end of a downstream Okazaki fragment.</text>
</comment>
<comment type="cofactor">
    <cofactor evidence="1">
        <name>Mg(2+)</name>
        <dbReference type="ChEBI" id="CHEBI:18420"/>
    </cofactor>
    <text evidence="1">Binds 2 Mg(2+) per subunit. Only one magnesium ion has a direct interaction with the protein, the other interactions are indirect.</text>
</comment>
<comment type="cofactor">
    <cofactor evidence="1">
        <name>K(+)</name>
        <dbReference type="ChEBI" id="CHEBI:29103"/>
    </cofactor>
    <text evidence="1">Binds 1 K(+) per subunit. The potassium ion strongly increases the affinity for DNA.</text>
</comment>
<comment type="similarity">
    <text evidence="1">Belongs to the Xni family.</text>
</comment>